<proteinExistence type="evidence at protein level"/>
<reference key="1">
    <citation type="journal article" date="2003" name="Science">
        <title>In-depth view of structure, activity, and evolution of rice chromosome 10.</title>
        <authorList>
            <person name="Yu Y."/>
            <person name="Rambo T."/>
            <person name="Currie J."/>
            <person name="Saski C."/>
            <person name="Kim H.-R."/>
            <person name="Collura K."/>
            <person name="Thompson S."/>
            <person name="Simmons J."/>
            <person name="Yang T.-J."/>
            <person name="Nah G."/>
            <person name="Patel A.J."/>
            <person name="Thurmond S."/>
            <person name="Henry D."/>
            <person name="Oates R."/>
            <person name="Palmer M."/>
            <person name="Pries G."/>
            <person name="Gibson J."/>
            <person name="Anderson H."/>
            <person name="Paradkar M."/>
            <person name="Crane L."/>
            <person name="Dale J."/>
            <person name="Carver M.B."/>
            <person name="Wood T."/>
            <person name="Frisch D."/>
            <person name="Engler F."/>
            <person name="Soderlund C."/>
            <person name="Palmer L.E."/>
            <person name="Teytelman L."/>
            <person name="Nascimento L."/>
            <person name="De la Bastide M."/>
            <person name="Spiegel L."/>
            <person name="Ware D."/>
            <person name="O'Shaughnessy A."/>
            <person name="Dike S."/>
            <person name="Dedhia N."/>
            <person name="Preston R."/>
            <person name="Huang E."/>
            <person name="Ferraro K."/>
            <person name="Kuit K."/>
            <person name="Miller B."/>
            <person name="Zutavern T."/>
            <person name="Katzenberger F."/>
            <person name="Muller S."/>
            <person name="Balija V."/>
            <person name="Martienssen R.A."/>
            <person name="Stein L."/>
            <person name="Minx P."/>
            <person name="Johnson D."/>
            <person name="Cordum H."/>
            <person name="Mardis E."/>
            <person name="Cheng Z."/>
            <person name="Jiang J."/>
            <person name="Wilson R."/>
            <person name="McCombie W.R."/>
            <person name="Wing R.A."/>
            <person name="Yuan Q."/>
            <person name="Ouyang S."/>
            <person name="Liu J."/>
            <person name="Jones K.M."/>
            <person name="Gansberger K."/>
            <person name="Moffat K."/>
            <person name="Hill J."/>
            <person name="Tsitrin T."/>
            <person name="Overton L."/>
            <person name="Bera J."/>
            <person name="Kim M."/>
            <person name="Jin S."/>
            <person name="Tallon L."/>
            <person name="Ciecko A."/>
            <person name="Pai G."/>
            <person name="Van Aken S."/>
            <person name="Utterback T."/>
            <person name="Reidmuller S."/>
            <person name="Bormann J."/>
            <person name="Feldblyum T."/>
            <person name="Hsiao J."/>
            <person name="Zismann V."/>
            <person name="Blunt S."/>
            <person name="de Vazeille A.R."/>
            <person name="Shaffer T."/>
            <person name="Koo H."/>
            <person name="Suh B."/>
            <person name="Yang Q."/>
            <person name="Haas B."/>
            <person name="Peterson J."/>
            <person name="Pertea M."/>
            <person name="Volfovsky N."/>
            <person name="Wortman J."/>
            <person name="White O."/>
            <person name="Salzberg S.L."/>
            <person name="Fraser C.M."/>
            <person name="Buell C.R."/>
            <person name="Messing J."/>
            <person name="Song R."/>
            <person name="Fuks G."/>
            <person name="Llaca V."/>
            <person name="Kovchak S."/>
            <person name="Young S."/>
            <person name="Bowers J.E."/>
            <person name="Paterson A.H."/>
            <person name="Johns M.A."/>
            <person name="Mao L."/>
            <person name="Pan H."/>
            <person name="Dean R.A."/>
        </authorList>
    </citation>
    <scope>NUCLEOTIDE SEQUENCE [LARGE SCALE GENOMIC DNA]</scope>
    <source>
        <strain>cv. Nipponbare</strain>
    </source>
</reference>
<reference key="2">
    <citation type="journal article" date="2005" name="Nature">
        <title>The map-based sequence of the rice genome.</title>
        <authorList>
            <consortium name="International rice genome sequencing project (IRGSP)"/>
        </authorList>
    </citation>
    <scope>NUCLEOTIDE SEQUENCE [LARGE SCALE GENOMIC DNA]</scope>
    <source>
        <strain>cv. Nipponbare</strain>
    </source>
</reference>
<reference key="3">
    <citation type="journal article" date="2008" name="Nucleic Acids Res.">
        <title>The rice annotation project database (RAP-DB): 2008 update.</title>
        <authorList>
            <consortium name="The rice annotation project (RAP)"/>
        </authorList>
    </citation>
    <scope>GENOME REANNOTATION</scope>
    <source>
        <strain>cv. Nipponbare</strain>
    </source>
</reference>
<reference key="4">
    <citation type="journal article" date="2013" name="Rice">
        <title>Improvement of the Oryza sativa Nipponbare reference genome using next generation sequence and optical map data.</title>
        <authorList>
            <person name="Kawahara Y."/>
            <person name="de la Bastide M."/>
            <person name="Hamilton J.P."/>
            <person name="Kanamori H."/>
            <person name="McCombie W.R."/>
            <person name="Ouyang S."/>
            <person name="Schwartz D.C."/>
            <person name="Tanaka T."/>
            <person name="Wu J."/>
            <person name="Zhou S."/>
            <person name="Childs K.L."/>
            <person name="Davidson R.M."/>
            <person name="Lin H."/>
            <person name="Quesada-Ocampo L."/>
            <person name="Vaillancourt B."/>
            <person name="Sakai H."/>
            <person name="Lee S.S."/>
            <person name="Kim J."/>
            <person name="Numa H."/>
            <person name="Itoh T."/>
            <person name="Buell C.R."/>
            <person name="Matsumoto T."/>
        </authorList>
    </citation>
    <scope>GENOME REANNOTATION</scope>
    <source>
        <strain>cv. Nipponbare</strain>
    </source>
</reference>
<reference key="5">
    <citation type="journal article" date="2003" name="Science">
        <title>Collection, mapping, and annotation of over 28,000 cDNA clones from japonica rice.</title>
        <authorList>
            <consortium name="The rice full-length cDNA consortium"/>
        </authorList>
    </citation>
    <scope>NUCLEOTIDE SEQUENCE [LARGE SCALE MRNA] (ISOFORMS 1 AND 2)</scope>
    <source>
        <strain>cv. Nipponbare</strain>
    </source>
</reference>
<reference key="6">
    <citation type="journal article" date="2006" name="Photosyn. Res.">
        <title>Plant methionine sulfoxide reductase A and B multigenic families.</title>
        <authorList>
            <person name="Rouhier N."/>
            <person name="Vieira Dos Santos C."/>
            <person name="Tarrago L."/>
            <person name="Rey P."/>
        </authorList>
    </citation>
    <scope>GENE FAMILY</scope>
    <scope>NOMENCLATURE</scope>
</reference>
<reference key="7">
    <citation type="journal article" date="2009" name="Planta">
        <title>OsMSRA4.1 and OsMSRB1.1, two rice plastidial methionine sulfoxide reductases, are involved in abiotic stress responses.</title>
        <authorList>
            <person name="Guo X."/>
            <person name="Wu Y."/>
            <person name="Wang Y."/>
            <person name="Chen Y."/>
            <person name="Chu C."/>
        </authorList>
    </citation>
    <scope>FUNCTION</scope>
    <scope>CATALYTIC ACTIVITY</scope>
    <scope>SUBCELLULAR LOCATION</scope>
    <scope>TISSUE SPECIFICITY</scope>
    <scope>INDUCTION</scope>
</reference>
<protein>
    <recommendedName>
        <fullName evidence="5">Peptide methionine sulfoxide reductase A4, chloroplastic</fullName>
        <shortName evidence="4">OsMSRA4</shortName>
        <ecNumber evidence="2">1.8.4.11</ecNumber>
    </recommendedName>
    <alternativeName>
        <fullName evidence="5">Peptide-methionine (S)-S-oxide reductase</fullName>
        <shortName evidence="5">Peptide Met(O) reductase</shortName>
    </alternativeName>
    <alternativeName>
        <fullName evidence="5">Protein-methionine-S-oxide reductase</fullName>
    </alternativeName>
</protein>
<organism>
    <name type="scientific">Oryza sativa subsp. japonica</name>
    <name type="common">Rice</name>
    <dbReference type="NCBI Taxonomy" id="39947"/>
    <lineage>
        <taxon>Eukaryota</taxon>
        <taxon>Viridiplantae</taxon>
        <taxon>Streptophyta</taxon>
        <taxon>Embryophyta</taxon>
        <taxon>Tracheophyta</taxon>
        <taxon>Spermatophyta</taxon>
        <taxon>Magnoliopsida</taxon>
        <taxon>Liliopsida</taxon>
        <taxon>Poales</taxon>
        <taxon>Poaceae</taxon>
        <taxon>BOP clade</taxon>
        <taxon>Oryzoideae</taxon>
        <taxon>Oryzeae</taxon>
        <taxon>Oryzinae</taxon>
        <taxon>Oryza</taxon>
        <taxon>Oryza sativa</taxon>
    </lineage>
</organism>
<comment type="function">
    <text evidence="2">Catalyzes the reduction of methionine sulfoxide (MetSO) to methionine in proteins. Involved in abiotic and salt stress responses. Plays a protective role against oxidative stress by restoring activity to proteins that have been inactivated by methionine oxidation. MSRA family specifically reduces the MetSO S-enantiomer.</text>
</comment>
<comment type="catalytic activity">
    <reaction evidence="2">
        <text>L-methionyl-[protein] + [thioredoxin]-disulfide + H2O = L-methionyl-(S)-S-oxide-[protein] + [thioredoxin]-dithiol</text>
        <dbReference type="Rhea" id="RHEA:14217"/>
        <dbReference type="Rhea" id="RHEA-COMP:10698"/>
        <dbReference type="Rhea" id="RHEA-COMP:10700"/>
        <dbReference type="Rhea" id="RHEA-COMP:12313"/>
        <dbReference type="Rhea" id="RHEA-COMP:12315"/>
        <dbReference type="ChEBI" id="CHEBI:15377"/>
        <dbReference type="ChEBI" id="CHEBI:16044"/>
        <dbReference type="ChEBI" id="CHEBI:29950"/>
        <dbReference type="ChEBI" id="CHEBI:44120"/>
        <dbReference type="ChEBI" id="CHEBI:50058"/>
        <dbReference type="EC" id="1.8.4.11"/>
    </reaction>
</comment>
<comment type="catalytic activity">
    <reaction evidence="2">
        <text>[thioredoxin]-disulfide + L-methionine + H2O = L-methionine (S)-S-oxide + [thioredoxin]-dithiol</text>
        <dbReference type="Rhea" id="RHEA:19993"/>
        <dbReference type="Rhea" id="RHEA-COMP:10698"/>
        <dbReference type="Rhea" id="RHEA-COMP:10700"/>
        <dbReference type="ChEBI" id="CHEBI:15377"/>
        <dbReference type="ChEBI" id="CHEBI:29950"/>
        <dbReference type="ChEBI" id="CHEBI:50058"/>
        <dbReference type="ChEBI" id="CHEBI:57844"/>
        <dbReference type="ChEBI" id="CHEBI:58772"/>
        <dbReference type="EC" id="1.8.4.11"/>
    </reaction>
</comment>
<comment type="subcellular location">
    <subcellularLocation>
        <location evidence="2">Plastid</location>
        <location evidence="2">Chloroplast</location>
    </subcellularLocation>
</comment>
<comment type="alternative products">
    <event type="alternative splicing"/>
    <isoform>
        <id>Q336R9-1</id>
        <name>1</name>
        <sequence type="displayed"/>
    </isoform>
    <isoform>
        <id>Q336R9-2</id>
        <name>2</name>
        <sequence type="described" ref="VSP_039507 VSP_039508"/>
    </isoform>
</comment>
<comment type="tissue specificity">
    <text evidence="2">Expressed in roots, stems, leaves and flowers.</text>
</comment>
<comment type="induction">
    <text evidence="2">By salt, mannitol, cold, high temperatures and methyl viologen.</text>
</comment>
<comment type="similarity">
    <text evidence="5">Belongs to the MsrA Met sulfoxide reductase family.</text>
</comment>
<sequence>MPPLLASTSSTSPLLLASRLRGGGGCGCGGAPLLHRTRRGFLAPSTTTTQTTRTSFAAMSWLGKLGLGGLGGSPRASAASAALAQGPDEDRPAAGNEFAQFGAGCFWGVELAFQRVPGVTRTEVGYSQGNLHDPTYEDVCTGATYHNEVVRVHYDVSACKFDDLLDVFWARHDPTTPNRQGNDVGTQYRSGIYYYTPEQEKAARESLEKQQKLLNRTIVTEILPAKRFYRAEEYHQQYLAKGGRFGFRQSAEKGCNDPIRCYG</sequence>
<accession>Q336R9</accession>
<accession>A0A0P0XX97</accession>
<accession>Q336S0</accession>
<gene>
    <name evidence="4" type="primary">MSRA4</name>
    <name evidence="7" type="ordered locus">Os10g0563600</name>
    <name evidence="6" type="ordered locus">LOC_Os10g41400</name>
</gene>
<name>MSRA4_ORYSJ</name>
<dbReference type="EC" id="1.8.4.11" evidence="2"/>
<dbReference type="EMBL" id="DP000086">
    <property type="protein sequence ID" value="ABB47990.2"/>
    <property type="molecule type" value="Genomic_DNA"/>
</dbReference>
<dbReference type="EMBL" id="DP000086">
    <property type="protein sequence ID" value="ABB47991.2"/>
    <property type="molecule type" value="Genomic_DNA"/>
</dbReference>
<dbReference type="EMBL" id="AP008216">
    <property type="protein sequence ID" value="BAF27240.1"/>
    <property type="molecule type" value="Genomic_DNA"/>
</dbReference>
<dbReference type="EMBL" id="AP014966">
    <property type="protein sequence ID" value="BAT12084.1"/>
    <property type="molecule type" value="Genomic_DNA"/>
</dbReference>
<dbReference type="EMBL" id="AP014966">
    <property type="protein sequence ID" value="BAT12085.1"/>
    <property type="molecule type" value="Genomic_DNA"/>
</dbReference>
<dbReference type="EMBL" id="AK067167">
    <property type="protein sequence ID" value="BAG90297.1"/>
    <property type="molecule type" value="mRNA"/>
</dbReference>
<dbReference type="EMBL" id="AK109715">
    <property type="status" value="NOT_ANNOTATED_CDS"/>
    <property type="molecule type" value="mRNA"/>
</dbReference>
<dbReference type="RefSeq" id="XP_015614143.1">
    <property type="nucleotide sequence ID" value="XM_015758657.1"/>
</dbReference>
<dbReference type="SMR" id="Q336R9"/>
<dbReference type="FunCoup" id="Q336R9">
    <property type="interactions" value="2496"/>
</dbReference>
<dbReference type="STRING" id="39947.Q336R9"/>
<dbReference type="iPTMnet" id="Q336R9"/>
<dbReference type="PaxDb" id="39947-Q336R9"/>
<dbReference type="EnsemblPlants" id="Os10t0563600-01">
    <molecule id="Q336R9-1"/>
    <property type="protein sequence ID" value="Os10t0563600-01"/>
    <property type="gene ID" value="Os10g0563600"/>
</dbReference>
<dbReference type="Gramene" id="Os10t0563600-01">
    <molecule id="Q336R9-1"/>
    <property type="protein sequence ID" value="Os10t0563600-01"/>
    <property type="gene ID" value="Os10g0563600"/>
</dbReference>
<dbReference type="KEGG" id="dosa:Os10g0563600"/>
<dbReference type="eggNOG" id="KOG1635">
    <property type="taxonomic scope" value="Eukaryota"/>
</dbReference>
<dbReference type="HOGENOM" id="CLU_031040_3_0_1"/>
<dbReference type="InParanoid" id="Q336R9"/>
<dbReference type="OMA" id="STMHSEV"/>
<dbReference type="OrthoDB" id="77405at2759"/>
<dbReference type="Proteomes" id="UP000000763">
    <property type="component" value="Chromosome 10"/>
</dbReference>
<dbReference type="Proteomes" id="UP000059680">
    <property type="component" value="Chromosome 10"/>
</dbReference>
<dbReference type="GO" id="GO:0009507">
    <property type="term" value="C:chloroplast"/>
    <property type="evidence" value="ECO:0000314"/>
    <property type="project" value="UniProtKB"/>
</dbReference>
<dbReference type="GO" id="GO:0005737">
    <property type="term" value="C:cytoplasm"/>
    <property type="evidence" value="ECO:0000318"/>
    <property type="project" value="GO_Central"/>
</dbReference>
<dbReference type="GO" id="GO:0036456">
    <property type="term" value="F:L-methionine-(S)-S-oxide reductase activity"/>
    <property type="evidence" value="ECO:0000318"/>
    <property type="project" value="GO_Central"/>
</dbReference>
<dbReference type="GO" id="GO:0008113">
    <property type="term" value="F:peptide-methionine (S)-S-oxide reductase activity"/>
    <property type="evidence" value="ECO:0000314"/>
    <property type="project" value="UniProtKB"/>
</dbReference>
<dbReference type="GO" id="GO:0034599">
    <property type="term" value="P:cellular response to oxidative stress"/>
    <property type="evidence" value="ECO:0000318"/>
    <property type="project" value="GO_Central"/>
</dbReference>
<dbReference type="GO" id="GO:0006979">
    <property type="term" value="P:response to oxidative stress"/>
    <property type="evidence" value="ECO:0000314"/>
    <property type="project" value="UniProtKB"/>
</dbReference>
<dbReference type="GO" id="GO:0009651">
    <property type="term" value="P:response to salt stress"/>
    <property type="evidence" value="ECO:0000315"/>
    <property type="project" value="UniProtKB"/>
</dbReference>
<dbReference type="FunFam" id="3.30.1060.10:FF:000002">
    <property type="entry name" value="Peptide methionine sulfoxide reductase"/>
    <property type="match status" value="1"/>
</dbReference>
<dbReference type="Gene3D" id="3.30.1060.10">
    <property type="entry name" value="Peptide methionine sulphoxide reductase MsrA"/>
    <property type="match status" value="1"/>
</dbReference>
<dbReference type="HAMAP" id="MF_01401">
    <property type="entry name" value="MsrA"/>
    <property type="match status" value="1"/>
</dbReference>
<dbReference type="InterPro" id="IPR002569">
    <property type="entry name" value="Met_Sox_Rdtase_MsrA_dom"/>
</dbReference>
<dbReference type="InterPro" id="IPR036509">
    <property type="entry name" value="Met_Sox_Rdtase_MsrA_sf"/>
</dbReference>
<dbReference type="InterPro" id="IPR050162">
    <property type="entry name" value="MsrA_MetSO_reductase"/>
</dbReference>
<dbReference type="NCBIfam" id="TIGR00401">
    <property type="entry name" value="msrA"/>
    <property type="match status" value="1"/>
</dbReference>
<dbReference type="PANTHER" id="PTHR42799">
    <property type="entry name" value="MITOCHONDRIAL PEPTIDE METHIONINE SULFOXIDE REDUCTASE"/>
    <property type="match status" value="1"/>
</dbReference>
<dbReference type="PANTHER" id="PTHR42799:SF2">
    <property type="entry name" value="MITOCHONDRIAL PEPTIDE METHIONINE SULFOXIDE REDUCTASE"/>
    <property type="match status" value="1"/>
</dbReference>
<dbReference type="Pfam" id="PF01625">
    <property type="entry name" value="PMSR"/>
    <property type="match status" value="1"/>
</dbReference>
<dbReference type="SUPFAM" id="SSF55068">
    <property type="entry name" value="Peptide methionine sulfoxide reductase"/>
    <property type="match status" value="1"/>
</dbReference>
<feature type="transit peptide" description="Chloroplast" evidence="1">
    <location>
        <begin position="1"/>
        <end position="75"/>
    </location>
</feature>
<feature type="chain" id="PRO_0000395517" description="Peptide methionine sulfoxide reductase A4, chloroplastic">
    <location>
        <begin position="76"/>
        <end position="263"/>
    </location>
</feature>
<feature type="splice variant" id="VSP_039507" description="In isoform 2." evidence="3">
    <original>GNDVGTQYRSGIYYYTPEQEKAARESLEKQQ</original>
    <variation>VSQPQINSIHKPNRMISFTVPCSMLNFGFFD</variation>
    <location>
        <begin position="181"/>
        <end position="211"/>
    </location>
</feature>
<feature type="splice variant" id="VSP_039508" description="In isoform 2." evidence="3">
    <location>
        <begin position="212"/>
        <end position="263"/>
    </location>
</feature>
<feature type="sequence conflict" description="In Ref. 5; AK109715." evidence="5" ref="5">
    <original>P</original>
    <variation>S</variation>
    <location>
        <position position="44"/>
    </location>
</feature>
<evidence type="ECO:0000255" key="1"/>
<evidence type="ECO:0000269" key="2">
    <source>
    </source>
</evidence>
<evidence type="ECO:0000303" key="3">
    <source>
    </source>
</evidence>
<evidence type="ECO:0000303" key="4">
    <source>
    </source>
</evidence>
<evidence type="ECO:0000305" key="5"/>
<evidence type="ECO:0000312" key="6">
    <source>
        <dbReference type="EMBL" id="ABB47990.2"/>
    </source>
</evidence>
<evidence type="ECO:0000312" key="7">
    <source>
        <dbReference type="EMBL" id="BAT12084.1"/>
    </source>
</evidence>
<keyword id="KW-0025">Alternative splicing</keyword>
<keyword id="KW-0150">Chloroplast</keyword>
<keyword id="KW-0560">Oxidoreductase</keyword>
<keyword id="KW-0934">Plastid</keyword>
<keyword id="KW-1185">Reference proteome</keyword>
<keyword id="KW-0809">Transit peptide</keyword>